<dbReference type="EC" id="2.3.1.-" evidence="4 5 6"/>
<dbReference type="EMBL" id="MG384313">
    <property type="protein sequence ID" value="AUO29223.1"/>
    <property type="molecule type" value="mRNA"/>
</dbReference>
<dbReference type="EMBL" id="CH476597">
    <property type="protein sequence ID" value="EAU36837.1"/>
    <property type="status" value="ALT_SEQ"/>
    <property type="molecule type" value="Genomic_DNA"/>
</dbReference>
<dbReference type="RefSeq" id="XP_001212741.1">
    <property type="nucleotide sequence ID" value="XM_001212741.1"/>
</dbReference>
<dbReference type="SMR" id="Q0CRX1"/>
<dbReference type="STRING" id="341663.Q0CRX1"/>
<dbReference type="ESTHER" id="asptn-mela">
    <property type="family name" value="Thioesterase"/>
</dbReference>
<dbReference type="EnsemblFungi" id="EAU36837">
    <property type="protein sequence ID" value="EAU36837"/>
    <property type="gene ID" value="ATEG_03563"/>
</dbReference>
<dbReference type="GeneID" id="4317932"/>
<dbReference type="eggNOG" id="KOG1176">
    <property type="taxonomic scope" value="Eukaryota"/>
</dbReference>
<dbReference type="HOGENOM" id="CLU_000022_23_6_1"/>
<dbReference type="OrthoDB" id="10253869at2759"/>
<dbReference type="Proteomes" id="UP000007963">
    <property type="component" value="Unassembled WGS sequence"/>
</dbReference>
<dbReference type="GO" id="GO:0005737">
    <property type="term" value="C:cytoplasm"/>
    <property type="evidence" value="ECO:0007669"/>
    <property type="project" value="UniProtKB-SubCell"/>
</dbReference>
<dbReference type="GO" id="GO:0031177">
    <property type="term" value="F:phosphopantetheine binding"/>
    <property type="evidence" value="ECO:0007669"/>
    <property type="project" value="InterPro"/>
</dbReference>
<dbReference type="GO" id="GO:0016740">
    <property type="term" value="F:transferase activity"/>
    <property type="evidence" value="ECO:0007669"/>
    <property type="project" value="UniProtKB-KW"/>
</dbReference>
<dbReference type="GO" id="GO:0031957">
    <property type="term" value="F:very long-chain fatty acid-CoA ligase activity"/>
    <property type="evidence" value="ECO:0007669"/>
    <property type="project" value="TreeGrafter"/>
</dbReference>
<dbReference type="GO" id="GO:0006633">
    <property type="term" value="P:fatty acid biosynthetic process"/>
    <property type="evidence" value="ECO:0007669"/>
    <property type="project" value="TreeGrafter"/>
</dbReference>
<dbReference type="Gene3D" id="3.30.300.30">
    <property type="match status" value="1"/>
</dbReference>
<dbReference type="Gene3D" id="1.10.1200.10">
    <property type="entry name" value="ACP-like"/>
    <property type="match status" value="1"/>
</dbReference>
<dbReference type="Gene3D" id="3.40.50.1820">
    <property type="entry name" value="alpha/beta hydrolase"/>
    <property type="match status" value="1"/>
</dbReference>
<dbReference type="Gene3D" id="3.40.50.12780">
    <property type="entry name" value="N-terminal domain of ligase-like"/>
    <property type="match status" value="1"/>
</dbReference>
<dbReference type="InterPro" id="IPR029058">
    <property type="entry name" value="AB_hydrolase_fold"/>
</dbReference>
<dbReference type="InterPro" id="IPR036736">
    <property type="entry name" value="ACP-like_sf"/>
</dbReference>
<dbReference type="InterPro" id="IPR045851">
    <property type="entry name" value="AMP-bd_C_sf"/>
</dbReference>
<dbReference type="InterPro" id="IPR020845">
    <property type="entry name" value="AMP-binding_CS"/>
</dbReference>
<dbReference type="InterPro" id="IPR000873">
    <property type="entry name" value="AMP-dep_synth/lig_dom"/>
</dbReference>
<dbReference type="InterPro" id="IPR042099">
    <property type="entry name" value="ANL_N_sf"/>
</dbReference>
<dbReference type="InterPro" id="IPR020806">
    <property type="entry name" value="PKS_PP-bd"/>
</dbReference>
<dbReference type="InterPro" id="IPR009081">
    <property type="entry name" value="PP-bd_ACP"/>
</dbReference>
<dbReference type="InterPro" id="IPR001031">
    <property type="entry name" value="Thioesterase"/>
</dbReference>
<dbReference type="PANTHER" id="PTHR24096">
    <property type="entry name" value="LONG-CHAIN-FATTY-ACID--COA LIGASE"/>
    <property type="match status" value="1"/>
</dbReference>
<dbReference type="PANTHER" id="PTHR24096:SF267">
    <property type="entry name" value="MALONATE--COA LIGASE ACSF3, MITOCHONDRIAL"/>
    <property type="match status" value="1"/>
</dbReference>
<dbReference type="Pfam" id="PF00501">
    <property type="entry name" value="AMP-binding"/>
    <property type="match status" value="1"/>
</dbReference>
<dbReference type="Pfam" id="PF00550">
    <property type="entry name" value="PP-binding"/>
    <property type="match status" value="1"/>
</dbReference>
<dbReference type="Pfam" id="PF00975">
    <property type="entry name" value="Thioesterase"/>
    <property type="match status" value="1"/>
</dbReference>
<dbReference type="SMART" id="SM00823">
    <property type="entry name" value="PKS_PP"/>
    <property type="match status" value="1"/>
</dbReference>
<dbReference type="SUPFAM" id="SSF56801">
    <property type="entry name" value="Acetyl-CoA synthetase-like"/>
    <property type="match status" value="1"/>
</dbReference>
<dbReference type="SUPFAM" id="SSF47336">
    <property type="entry name" value="ACP-like"/>
    <property type="match status" value="1"/>
</dbReference>
<dbReference type="SUPFAM" id="SSF53474">
    <property type="entry name" value="alpha/beta-Hydrolases"/>
    <property type="match status" value="1"/>
</dbReference>
<dbReference type="PROSITE" id="PS00455">
    <property type="entry name" value="AMP_BINDING"/>
    <property type="match status" value="1"/>
</dbReference>
<dbReference type="PROSITE" id="PS50075">
    <property type="entry name" value="CARRIER"/>
    <property type="match status" value="1"/>
</dbReference>
<sequence length="925" mass="102373">MQPSLIPSLLETAAARNGDGRVILYSQGNREDPRSITYRDLLETASKASVAVHNHQNYTPGAAVLLHFNNHLDNIVWFWAVLLAGCIPAITPAFSNNPVQRVANLEHLSSTLITDWCLTSQALLVEFAGQDAIEPVSVETLGWEKASPDSNTASVKAKPTDTALLLFTSGSTGKSKAVCLSHFQIVSAIAGKLSVVPLPEQSSFLNWVGLDHVAAIIEIHLQALYADLDQVHVPGSDVISDPIWFLDLMATHRVSRTFAPNFFLARIRDALVQNARSASPRQWDLSGLRYVASGGEANTTKTCDELSQLLKSFGAPLNVIVPGFGMTETCAGAIFNTNCPDYDKKHGLEYTSVGSCMPGIFMRVTNQQGDPLPPGEMGSLELAGPVVFRQYLNNPAATQESFTMDGWFKTGDCGTLDENGYLVLGGRAKETIIINGVKYSPHEIETAVEEHNIKGLSRSFTCCFSSLSPGAETEEIVLVYLPTYAPEDIPARAATADAISKVVLMSTGSRPHIIPLEQALLPKSTLGKLSRSKIKAAYERGEYRTHDSINRSLIARHRQATRASPKNDFEKGLLEIFLRSFKISEDEFDVQTPIFDVGIDSIELINLKRDIEQHLGFADATIPIIILLENTTVRELAAALDNLYRPKEYNPVVTLQAHGDKNPLWLVHPGAGEVLIFINLAKFITDRPVYALRARGFDEGEKPFDSIEDAVTSYYNGVKSKQPHGPYALAGYCYGSMLAFEVAKKLEENGDEVRFVGSFNLPPHIKMRMRELDWKECLLHLAYFLDLITQKRSRELAVELDGLDQDTILQAIIDEADKERYAQLSLSRPFLSRWADVAYELHRIAGDYDPDGRVASMDVFFSIPLAIAAASKSEWRNVHLSQWDDFTRSHVRFHDVPGEHYSMIGPEHVFAFQKILRSALAERGM</sequence>
<comment type="function">
    <text evidence="3 4 5 6">Nonribosomal peptide synthase; part of the gene cluster that mediates the biosynthesis of Asp-melanin, a pigment that confers resistance against UV light and hampers phagocytosis by soil amoeba (PubMed:23841722, PubMed:27133313, PubMed:29270299, PubMed:29305695). The nonribosomal peptide synthase melA converts 4-hydroxyphenylpyruvate (4-HPPA) to aspulvinone E (PubMed:27133313, PubMed:29270299, PubMed:29305695). The tyrosinase tyrP then performs hydroxylations of both aromatic moieties of aspulvinone E (PubMed:27133313, PubMed:29305695). The product of tyrP is highly unstable, and, due to the high reactivity of methides and ortho-diquinones, the polymeric Asp-melanin forms spontaneously (PubMed:27133313).</text>
</comment>
<comment type="catalytic activity">
    <reaction evidence="4 5 6">
        <text>2 3-(4-hydroxyphenyl)pyruvate + AH2 + 2 ATP + O2 = aspulvinone E + A + 2 AMP + CO2 + 2 diphosphate + H2O + H(+)</text>
        <dbReference type="Rhea" id="RHEA:63824"/>
        <dbReference type="ChEBI" id="CHEBI:13193"/>
        <dbReference type="ChEBI" id="CHEBI:15377"/>
        <dbReference type="ChEBI" id="CHEBI:15378"/>
        <dbReference type="ChEBI" id="CHEBI:15379"/>
        <dbReference type="ChEBI" id="CHEBI:16526"/>
        <dbReference type="ChEBI" id="CHEBI:17499"/>
        <dbReference type="ChEBI" id="CHEBI:30616"/>
        <dbReference type="ChEBI" id="CHEBI:33019"/>
        <dbReference type="ChEBI" id="CHEBI:36242"/>
        <dbReference type="ChEBI" id="CHEBI:58240"/>
        <dbReference type="ChEBI" id="CHEBI:456215"/>
    </reaction>
    <physiologicalReaction direction="left-to-right" evidence="4 5 6">
        <dbReference type="Rhea" id="RHEA:63825"/>
    </physiologicalReaction>
</comment>
<comment type="subcellular location">
    <subcellularLocation>
        <location evidence="5">Cytoplasm</location>
    </subcellularLocation>
</comment>
<comment type="induction">
    <text evidence="4">Expression is induced during conidiation.</text>
</comment>
<comment type="domain">
    <text evidence="10 11">AtrA has a A-T-TE domain architecture (Probable). The adenylation (A) domain recognizes and activates the aryl acid substrates, and loads them onto the thiolation (T) domain (Probable). The thioesterase (TE) domain shares the missing condensation (C) domain function, and is responsible for condensation and final product release (Probable).</text>
</comment>
<comment type="disruption phenotype">
    <text evidence="3 4">Results in white conidia.</text>
</comment>
<comment type="similarity">
    <text evidence="9">Belongs to the NRP synthetase family.</text>
</comment>
<comment type="sequence caution" evidence="9">
    <conflict type="erroneous gene model prediction">
        <sequence resource="EMBL-CDS" id="EAU36837"/>
    </conflict>
</comment>
<proteinExistence type="evidence at protein level"/>
<organism>
    <name type="scientific">Aspergillus terreus (strain NIH 2624 / FGSC A1156)</name>
    <dbReference type="NCBI Taxonomy" id="341663"/>
    <lineage>
        <taxon>Eukaryota</taxon>
        <taxon>Fungi</taxon>
        <taxon>Dikarya</taxon>
        <taxon>Ascomycota</taxon>
        <taxon>Pezizomycotina</taxon>
        <taxon>Eurotiomycetes</taxon>
        <taxon>Eurotiomycetidae</taxon>
        <taxon>Eurotiales</taxon>
        <taxon>Aspergillaceae</taxon>
        <taxon>Aspergillus</taxon>
        <taxon>Aspergillus subgen. Circumdati</taxon>
    </lineage>
</organism>
<name>MELA_ASPTN</name>
<accession>Q0CRX1</accession>
<accession>A0A2I6SS15</accession>
<protein>
    <recommendedName>
        <fullName evidence="8">Aspulvinone E synthetase melA</fullName>
        <ecNumber evidence="4 5 6">2.3.1.-</ecNumber>
    </recommendedName>
    <alternativeName>
        <fullName evidence="8">Nonribosomal peptide synthase melA</fullName>
    </alternativeName>
</protein>
<reference key="1">
    <citation type="journal article" date="2018" name="Appl. Microbiol. Biotechnol.">
        <title>Production of alpha-keto carboxylic acid dimers in yeast by overexpression of NRPS-like genes from Aspergillus terreus.</title>
        <authorList>
            <person name="Huehner E."/>
            <person name="Backhaus K."/>
            <person name="Kraut R."/>
            <person name="Li S.M."/>
        </authorList>
    </citation>
    <scope>NUCLEOTIDE SEQUENCE [MRNA]</scope>
    <scope>DOMAIN</scope>
    <scope>FUNCTION</scope>
    <scope>CATALYTIC ACTIVITY</scope>
    <source>
        <strain>NIH 2624 / FGSC A1156</strain>
    </source>
</reference>
<reference key="2">
    <citation type="submission" date="2005-09" db="EMBL/GenBank/DDBJ databases">
        <title>Annotation of the Aspergillus terreus NIH2624 genome.</title>
        <authorList>
            <person name="Birren B.W."/>
            <person name="Lander E.S."/>
            <person name="Galagan J.E."/>
            <person name="Nusbaum C."/>
            <person name="Devon K."/>
            <person name="Henn M."/>
            <person name="Ma L.-J."/>
            <person name="Jaffe D.B."/>
            <person name="Butler J."/>
            <person name="Alvarez P."/>
            <person name="Gnerre S."/>
            <person name="Grabherr M."/>
            <person name="Kleber M."/>
            <person name="Mauceli E.W."/>
            <person name="Brockman W."/>
            <person name="Rounsley S."/>
            <person name="Young S.K."/>
            <person name="LaButti K."/>
            <person name="Pushparaj V."/>
            <person name="DeCaprio D."/>
            <person name="Crawford M."/>
            <person name="Koehrsen M."/>
            <person name="Engels R."/>
            <person name="Montgomery P."/>
            <person name="Pearson M."/>
            <person name="Howarth C."/>
            <person name="Larson L."/>
            <person name="Luoma S."/>
            <person name="White J."/>
            <person name="Alvarado L."/>
            <person name="Kodira C.D."/>
            <person name="Zeng Q."/>
            <person name="Oleary S."/>
            <person name="Yandava C."/>
            <person name="Denning D.W."/>
            <person name="Nierman W.C."/>
            <person name="Milne T."/>
            <person name="Madden K."/>
        </authorList>
    </citation>
    <scope>NUCLEOTIDE SEQUENCE [LARGE SCALE GENOMIC DNA]</scope>
    <source>
        <strain>NIH 2624 / FGSC A1156</strain>
    </source>
</reference>
<reference key="3">
    <citation type="journal article" date="2013" name="Org. Lett.">
        <title>Application of an efficient gene targeting system linking secondary metabolites to their biosynthetic genes in Aspergillus terreus.</title>
        <authorList>
            <person name="Guo C.J."/>
            <person name="Knox B.P."/>
            <person name="Sanchez J.F."/>
            <person name="Chiang Y.M."/>
            <person name="Bruno K.S."/>
            <person name="Wang C.C."/>
        </authorList>
    </citation>
    <scope>FUNCTION</scope>
    <scope>DISRUPTION PHENOTYPE</scope>
</reference>
<reference key="4">
    <citation type="journal article" date="2016" name="Cell Chem. Biol.">
        <title>A non-canonical melanin biosynthesis pathway protects Aspergillus terreus conidia from environmental stress.</title>
        <authorList>
            <person name="Geib E."/>
            <person name="Gressler M."/>
            <person name="Viediernikova I."/>
            <person name="Hillmann F."/>
            <person name="Jacobsen I.D."/>
            <person name="Nietzsche S."/>
            <person name="Hertweck C."/>
            <person name="Brock M."/>
        </authorList>
    </citation>
    <scope>INDUCTION</scope>
    <scope>DOMAIN</scope>
    <scope>DISRUPTION PHENOTYPE</scope>
    <scope>FUNCTION</scope>
    <scope>CATALYTIC ACTIVITY</scope>
</reference>
<reference key="5">
    <citation type="journal article" date="2017" name="Fungal Biol. Biotechnol.">
        <title>ATNT: an enhanced system for expression of polycistronic secondary metabolite gene clusters in Aspergillus niger.</title>
        <authorList>
            <person name="Geib E."/>
            <person name="Brock M."/>
        </authorList>
    </citation>
    <scope>FUNCTION</scope>
    <scope>CATALYTIC ACTIVITY</scope>
    <scope>SUBCELLULAR LOCATION</scope>
</reference>
<gene>
    <name evidence="7" type="primary">melA</name>
    <name type="ORF">ATEG_03563</name>
</gene>
<keyword id="KW-0963">Cytoplasm</keyword>
<keyword id="KW-0596">Phosphopantetheine</keyword>
<keyword id="KW-0597">Phosphoprotein</keyword>
<keyword id="KW-1185">Reference proteome</keyword>
<keyword id="KW-0808">Transferase</keyword>
<evidence type="ECO:0000255" key="1"/>
<evidence type="ECO:0000255" key="2">
    <source>
        <dbReference type="PROSITE-ProRule" id="PRU00258"/>
    </source>
</evidence>
<evidence type="ECO:0000269" key="3">
    <source>
    </source>
</evidence>
<evidence type="ECO:0000269" key="4">
    <source>
    </source>
</evidence>
<evidence type="ECO:0000269" key="5">
    <source>
    </source>
</evidence>
<evidence type="ECO:0000269" key="6">
    <source>
    </source>
</evidence>
<evidence type="ECO:0000303" key="7">
    <source>
    </source>
</evidence>
<evidence type="ECO:0000303" key="8">
    <source>
    </source>
</evidence>
<evidence type="ECO:0000305" key="9"/>
<evidence type="ECO:0000305" key="10">
    <source>
    </source>
</evidence>
<evidence type="ECO:0000305" key="11">
    <source>
    </source>
</evidence>
<feature type="chain" id="PRO_0000448621" description="Aspulvinone E synthetase melA">
    <location>
        <begin position="1"/>
        <end position="925"/>
    </location>
</feature>
<feature type="domain" description="Carrier" evidence="2">
    <location>
        <begin position="564"/>
        <end position="644"/>
    </location>
</feature>
<feature type="region of interest" description="Adenylation (A) domain" evidence="1 10">
    <location>
        <begin position="11"/>
        <end position="434"/>
    </location>
</feature>
<feature type="region of interest" description="Thioesterase (TE) domain" evidence="1 10">
    <location>
        <begin position="663"/>
        <end position="923"/>
    </location>
</feature>
<feature type="modified residue" description="O-(pantetheine 4'-phosphoryl)serine" evidence="2">
    <location>
        <position position="601"/>
    </location>
</feature>